<proteinExistence type="inferred from homology"/>
<name>KCY_DEIDV</name>
<evidence type="ECO:0000255" key="1">
    <source>
        <dbReference type="HAMAP-Rule" id="MF_00238"/>
    </source>
</evidence>
<comment type="catalytic activity">
    <reaction evidence="1">
        <text>CMP + ATP = CDP + ADP</text>
        <dbReference type="Rhea" id="RHEA:11600"/>
        <dbReference type="ChEBI" id="CHEBI:30616"/>
        <dbReference type="ChEBI" id="CHEBI:58069"/>
        <dbReference type="ChEBI" id="CHEBI:60377"/>
        <dbReference type="ChEBI" id="CHEBI:456216"/>
        <dbReference type="EC" id="2.7.4.25"/>
    </reaction>
</comment>
<comment type="catalytic activity">
    <reaction evidence="1">
        <text>dCMP + ATP = dCDP + ADP</text>
        <dbReference type="Rhea" id="RHEA:25094"/>
        <dbReference type="ChEBI" id="CHEBI:30616"/>
        <dbReference type="ChEBI" id="CHEBI:57566"/>
        <dbReference type="ChEBI" id="CHEBI:58593"/>
        <dbReference type="ChEBI" id="CHEBI:456216"/>
        <dbReference type="EC" id="2.7.4.25"/>
    </reaction>
</comment>
<comment type="subcellular location">
    <subcellularLocation>
        <location evidence="1">Cytoplasm</location>
    </subcellularLocation>
</comment>
<comment type="similarity">
    <text evidence="1">Belongs to the cytidylate kinase family. Type 1 subfamily.</text>
</comment>
<gene>
    <name evidence="1" type="primary">cmk</name>
    <name type="ordered locus">Deide_22220</name>
</gene>
<keyword id="KW-0067">ATP-binding</keyword>
<keyword id="KW-0963">Cytoplasm</keyword>
<keyword id="KW-0418">Kinase</keyword>
<keyword id="KW-0547">Nucleotide-binding</keyword>
<keyword id="KW-1185">Reference proteome</keyword>
<keyword id="KW-0808">Transferase</keyword>
<reference key="1">
    <citation type="journal article" date="2009" name="PLoS Genet.">
        <title>Alliance of proteomics and genomics to unravel the specificities of Sahara bacterium Deinococcus deserti.</title>
        <authorList>
            <person name="de Groot A."/>
            <person name="Dulermo R."/>
            <person name="Ortet P."/>
            <person name="Blanchard L."/>
            <person name="Guerin P."/>
            <person name="Fernandez B."/>
            <person name="Vacherie B."/>
            <person name="Dossat C."/>
            <person name="Jolivet E."/>
            <person name="Siguier P."/>
            <person name="Chandler M."/>
            <person name="Barakat M."/>
            <person name="Dedieu A."/>
            <person name="Barbe V."/>
            <person name="Heulin T."/>
            <person name="Sommer S."/>
            <person name="Achouak W."/>
            <person name="Armengaud J."/>
        </authorList>
    </citation>
    <scope>NUCLEOTIDE SEQUENCE [LARGE SCALE GENOMIC DNA]</scope>
    <source>
        <strain>DSM 17065 / CIP 109153 / LMG 22923 / VCD115</strain>
    </source>
</reference>
<accession>C1CZK3</accession>
<dbReference type="EC" id="2.7.4.25" evidence="1"/>
<dbReference type="EMBL" id="CP001114">
    <property type="protein sequence ID" value="ACO47251.1"/>
    <property type="molecule type" value="Genomic_DNA"/>
</dbReference>
<dbReference type="RefSeq" id="WP_012694372.1">
    <property type="nucleotide sequence ID" value="NC_012526.1"/>
</dbReference>
<dbReference type="SMR" id="C1CZK3"/>
<dbReference type="STRING" id="546414.Deide_22220"/>
<dbReference type="PaxDb" id="546414-Deide_22220"/>
<dbReference type="KEGG" id="ddr:Deide_22220"/>
<dbReference type="eggNOG" id="COG0283">
    <property type="taxonomic scope" value="Bacteria"/>
</dbReference>
<dbReference type="HOGENOM" id="CLU_079959_0_0_0"/>
<dbReference type="OrthoDB" id="9807434at2"/>
<dbReference type="Proteomes" id="UP000002208">
    <property type="component" value="Chromosome"/>
</dbReference>
<dbReference type="GO" id="GO:0005737">
    <property type="term" value="C:cytoplasm"/>
    <property type="evidence" value="ECO:0007669"/>
    <property type="project" value="UniProtKB-SubCell"/>
</dbReference>
<dbReference type="GO" id="GO:0005524">
    <property type="term" value="F:ATP binding"/>
    <property type="evidence" value="ECO:0007669"/>
    <property type="project" value="UniProtKB-UniRule"/>
</dbReference>
<dbReference type="GO" id="GO:0036430">
    <property type="term" value="F:CMP kinase activity"/>
    <property type="evidence" value="ECO:0007669"/>
    <property type="project" value="RHEA"/>
</dbReference>
<dbReference type="GO" id="GO:0036431">
    <property type="term" value="F:dCMP kinase activity"/>
    <property type="evidence" value="ECO:0007669"/>
    <property type="project" value="RHEA"/>
</dbReference>
<dbReference type="GO" id="GO:0006220">
    <property type="term" value="P:pyrimidine nucleotide metabolic process"/>
    <property type="evidence" value="ECO:0007669"/>
    <property type="project" value="UniProtKB-UniRule"/>
</dbReference>
<dbReference type="CDD" id="cd02020">
    <property type="entry name" value="CMPK"/>
    <property type="match status" value="1"/>
</dbReference>
<dbReference type="Gene3D" id="3.40.50.300">
    <property type="entry name" value="P-loop containing nucleotide triphosphate hydrolases"/>
    <property type="match status" value="1"/>
</dbReference>
<dbReference type="HAMAP" id="MF_00238">
    <property type="entry name" value="Cytidyl_kinase_type1"/>
    <property type="match status" value="1"/>
</dbReference>
<dbReference type="InterPro" id="IPR003136">
    <property type="entry name" value="Cytidylate_kin"/>
</dbReference>
<dbReference type="InterPro" id="IPR011994">
    <property type="entry name" value="Cytidylate_kinase_dom"/>
</dbReference>
<dbReference type="InterPro" id="IPR027417">
    <property type="entry name" value="P-loop_NTPase"/>
</dbReference>
<dbReference type="NCBIfam" id="TIGR00017">
    <property type="entry name" value="cmk"/>
    <property type="match status" value="1"/>
</dbReference>
<dbReference type="Pfam" id="PF02224">
    <property type="entry name" value="Cytidylate_kin"/>
    <property type="match status" value="1"/>
</dbReference>
<dbReference type="SUPFAM" id="SSF52540">
    <property type="entry name" value="P-loop containing nucleoside triphosphate hydrolases"/>
    <property type="match status" value="1"/>
</dbReference>
<sequence>MIVTIDGVAASGKSSVASGVARALGVPYVSSGLLYRAATLLGQDAGLDLTDQASLLAYLRDHPLRLEPLAEGNRVWQGQRDLTPELHSSAVDQGVSQVAAHPEVRAWVDDQLRALTPPFVAEGRDMGTNVFPHAPAKFYLTASPRVRAERRSRERPEAVEAIEAALIQRDALDTTQSAPAPDARVIDTGPLTLEQVIVAITSQLPSQ</sequence>
<feature type="chain" id="PRO_1000204446" description="Cytidylate kinase">
    <location>
        <begin position="1"/>
        <end position="207"/>
    </location>
</feature>
<feature type="binding site" evidence="1">
    <location>
        <begin position="7"/>
        <end position="15"/>
    </location>
    <ligand>
        <name>ATP</name>
        <dbReference type="ChEBI" id="CHEBI:30616"/>
    </ligand>
</feature>
<protein>
    <recommendedName>
        <fullName evidence="1">Cytidylate kinase</fullName>
        <shortName evidence="1">CK</shortName>
        <ecNumber evidence="1">2.7.4.25</ecNumber>
    </recommendedName>
    <alternativeName>
        <fullName evidence="1">Cytidine monophosphate kinase</fullName>
        <shortName evidence="1">CMP kinase</shortName>
    </alternativeName>
</protein>
<organism>
    <name type="scientific">Deinococcus deserti (strain DSM 17065 / CIP 109153 / LMG 22923 / VCD115)</name>
    <dbReference type="NCBI Taxonomy" id="546414"/>
    <lineage>
        <taxon>Bacteria</taxon>
        <taxon>Thermotogati</taxon>
        <taxon>Deinococcota</taxon>
        <taxon>Deinococci</taxon>
        <taxon>Deinococcales</taxon>
        <taxon>Deinococcaceae</taxon>
        <taxon>Deinococcus</taxon>
    </lineage>
</organism>